<comment type="function">
    <text evidence="1">Required for maturation of 30S ribosomal subunits.</text>
</comment>
<comment type="subcellular location">
    <subcellularLocation>
        <location evidence="1">Cytoplasm</location>
    </subcellularLocation>
</comment>
<comment type="similarity">
    <text evidence="1">Belongs to the RimP family.</text>
</comment>
<gene>
    <name evidence="1" type="primary">rimP</name>
    <name type="ordered locus">BT_0242</name>
</gene>
<reference key="1">
    <citation type="journal article" date="2007" name="Nat. Genet.">
        <title>Genomic analysis of Bartonella identifies type IV secretion systems as host adaptability factors.</title>
        <authorList>
            <person name="Saenz H.L."/>
            <person name="Engel P."/>
            <person name="Stoeckli M.C."/>
            <person name="Lanz C."/>
            <person name="Raddatz G."/>
            <person name="Vayssier-Taussat M."/>
            <person name="Birtles R."/>
            <person name="Schuster S.C."/>
            <person name="Dehio C."/>
        </authorList>
    </citation>
    <scope>NUCLEOTIDE SEQUENCE [LARGE SCALE GENOMIC DNA]</scope>
    <source>
        <strain>CIP 105476 / IBS 506</strain>
    </source>
</reference>
<organism>
    <name type="scientific">Bartonella tribocorum (strain CIP 105476 / IBS 506)</name>
    <dbReference type="NCBI Taxonomy" id="382640"/>
    <lineage>
        <taxon>Bacteria</taxon>
        <taxon>Pseudomonadati</taxon>
        <taxon>Pseudomonadota</taxon>
        <taxon>Alphaproteobacteria</taxon>
        <taxon>Hyphomicrobiales</taxon>
        <taxon>Bartonellaceae</taxon>
        <taxon>Bartonella</taxon>
    </lineage>
</organism>
<evidence type="ECO:0000255" key="1">
    <source>
        <dbReference type="HAMAP-Rule" id="MF_01077"/>
    </source>
</evidence>
<keyword id="KW-0963">Cytoplasm</keyword>
<keyword id="KW-0690">Ribosome biogenesis</keyword>
<protein>
    <recommendedName>
        <fullName evidence="1">Ribosome maturation factor RimP</fullName>
    </recommendedName>
</protein>
<name>RIMP_BART1</name>
<proteinExistence type="inferred from homology"/>
<accession>A9IMU4</accession>
<sequence length="208" mass="23465">MNEAEKISNLDEPRLFEEDGIEARVAALVIPLLKPLGFRLVRVKLLGQNGLTLQIMVERADGSLTVEDCETVSRTVSPLLDVENVIERKYHLEISSPGIDRPLVRKSDFFHWQGHLAKIETKITIDGRRKFRGTLTNITQDGFILNADKAAYGEAMYTSISFCDIIGAHLVLTDELIRDALKKNKDLSQQFIPEDNPTDSIQTLNFKK</sequence>
<feature type="chain" id="PRO_0000384612" description="Ribosome maturation factor RimP">
    <location>
        <begin position="1"/>
        <end position="208"/>
    </location>
</feature>
<dbReference type="EMBL" id="AM260525">
    <property type="protein sequence ID" value="CAK00718.1"/>
    <property type="molecule type" value="Genomic_DNA"/>
</dbReference>
<dbReference type="RefSeq" id="WP_012230637.1">
    <property type="nucleotide sequence ID" value="NC_010161.1"/>
</dbReference>
<dbReference type="SMR" id="A9IMU4"/>
<dbReference type="KEGG" id="btr:BT_0242"/>
<dbReference type="eggNOG" id="COG0779">
    <property type="taxonomic scope" value="Bacteria"/>
</dbReference>
<dbReference type="HOGENOM" id="CLU_070525_0_1_5"/>
<dbReference type="Proteomes" id="UP000001592">
    <property type="component" value="Chromosome"/>
</dbReference>
<dbReference type="GO" id="GO:0005829">
    <property type="term" value="C:cytosol"/>
    <property type="evidence" value="ECO:0007669"/>
    <property type="project" value="TreeGrafter"/>
</dbReference>
<dbReference type="GO" id="GO:0000028">
    <property type="term" value="P:ribosomal small subunit assembly"/>
    <property type="evidence" value="ECO:0007669"/>
    <property type="project" value="TreeGrafter"/>
</dbReference>
<dbReference type="GO" id="GO:0006412">
    <property type="term" value="P:translation"/>
    <property type="evidence" value="ECO:0007669"/>
    <property type="project" value="TreeGrafter"/>
</dbReference>
<dbReference type="CDD" id="cd01734">
    <property type="entry name" value="YlxS_C"/>
    <property type="match status" value="1"/>
</dbReference>
<dbReference type="Gene3D" id="3.30.300.70">
    <property type="entry name" value="RimP-like superfamily, N-terminal"/>
    <property type="match status" value="1"/>
</dbReference>
<dbReference type="HAMAP" id="MF_01077">
    <property type="entry name" value="RimP"/>
    <property type="match status" value="1"/>
</dbReference>
<dbReference type="InterPro" id="IPR003728">
    <property type="entry name" value="Ribosome_maturation_RimP"/>
</dbReference>
<dbReference type="InterPro" id="IPR028998">
    <property type="entry name" value="RimP_C"/>
</dbReference>
<dbReference type="InterPro" id="IPR036847">
    <property type="entry name" value="RimP_C_sf"/>
</dbReference>
<dbReference type="InterPro" id="IPR028989">
    <property type="entry name" value="RimP_N"/>
</dbReference>
<dbReference type="InterPro" id="IPR035956">
    <property type="entry name" value="RimP_N_sf"/>
</dbReference>
<dbReference type="NCBIfam" id="NF000932">
    <property type="entry name" value="PRK00092.2-5"/>
    <property type="match status" value="1"/>
</dbReference>
<dbReference type="PANTHER" id="PTHR33867">
    <property type="entry name" value="RIBOSOME MATURATION FACTOR RIMP"/>
    <property type="match status" value="1"/>
</dbReference>
<dbReference type="PANTHER" id="PTHR33867:SF1">
    <property type="entry name" value="RIBOSOME MATURATION FACTOR RIMP"/>
    <property type="match status" value="1"/>
</dbReference>
<dbReference type="Pfam" id="PF17384">
    <property type="entry name" value="DUF150_C"/>
    <property type="match status" value="1"/>
</dbReference>
<dbReference type="Pfam" id="PF02576">
    <property type="entry name" value="RimP_N"/>
    <property type="match status" value="1"/>
</dbReference>
<dbReference type="SUPFAM" id="SSF74942">
    <property type="entry name" value="YhbC-like, C-terminal domain"/>
    <property type="match status" value="1"/>
</dbReference>
<dbReference type="SUPFAM" id="SSF75420">
    <property type="entry name" value="YhbC-like, N-terminal domain"/>
    <property type="match status" value="1"/>
</dbReference>